<reference key="1">
    <citation type="journal article" date="2006" name="Nature">
        <title>DNA sequence and analysis of human chromosome 8.</title>
        <authorList>
            <person name="Nusbaum C."/>
            <person name="Mikkelsen T.S."/>
            <person name="Zody M.C."/>
            <person name="Asakawa S."/>
            <person name="Taudien S."/>
            <person name="Garber M."/>
            <person name="Kodira C.D."/>
            <person name="Schueler M.G."/>
            <person name="Shimizu A."/>
            <person name="Whittaker C.A."/>
            <person name="Chang J.L."/>
            <person name="Cuomo C.A."/>
            <person name="Dewar K."/>
            <person name="FitzGerald M.G."/>
            <person name="Yang X."/>
            <person name="Allen N.R."/>
            <person name="Anderson S."/>
            <person name="Asakawa T."/>
            <person name="Blechschmidt K."/>
            <person name="Bloom T."/>
            <person name="Borowsky M.L."/>
            <person name="Butler J."/>
            <person name="Cook A."/>
            <person name="Corum B."/>
            <person name="DeArellano K."/>
            <person name="DeCaprio D."/>
            <person name="Dooley K.T."/>
            <person name="Dorris L. III"/>
            <person name="Engels R."/>
            <person name="Gloeckner G."/>
            <person name="Hafez N."/>
            <person name="Hagopian D.S."/>
            <person name="Hall J.L."/>
            <person name="Ishikawa S.K."/>
            <person name="Jaffe D.B."/>
            <person name="Kamat A."/>
            <person name="Kudoh J."/>
            <person name="Lehmann R."/>
            <person name="Lokitsang T."/>
            <person name="Macdonald P."/>
            <person name="Major J.E."/>
            <person name="Matthews C.D."/>
            <person name="Mauceli E."/>
            <person name="Menzel U."/>
            <person name="Mihalev A.H."/>
            <person name="Minoshima S."/>
            <person name="Murayama Y."/>
            <person name="Naylor J.W."/>
            <person name="Nicol R."/>
            <person name="Nguyen C."/>
            <person name="O'Leary S.B."/>
            <person name="O'Neill K."/>
            <person name="Parker S.C.J."/>
            <person name="Polley A."/>
            <person name="Raymond C.K."/>
            <person name="Reichwald K."/>
            <person name="Rodriguez J."/>
            <person name="Sasaki T."/>
            <person name="Schilhabel M."/>
            <person name="Siddiqui R."/>
            <person name="Smith C.L."/>
            <person name="Sneddon T.P."/>
            <person name="Talamas J.A."/>
            <person name="Tenzin P."/>
            <person name="Topham K."/>
            <person name="Venkataraman V."/>
            <person name="Wen G."/>
            <person name="Yamazaki S."/>
            <person name="Young S.K."/>
            <person name="Zeng Q."/>
            <person name="Zimmer A.R."/>
            <person name="Rosenthal A."/>
            <person name="Birren B.W."/>
            <person name="Platzer M."/>
            <person name="Shimizu N."/>
            <person name="Lander E.S."/>
        </authorList>
    </citation>
    <scope>NUCLEOTIDE SEQUENCE [LARGE SCALE GENOMIC DNA]</scope>
</reference>
<sequence>MMARRDPKSWAKRLVRAQTLQKQRRAPVGPRAPPPDEEDPRLKCKNCGAFGHTARSTRCPMKCWKAALVPATLGKKEGKENLKPWKPRVEANPGPLNKDKGEKEERPRQQDPQRKALLHMFSGKPPEKPLPNGKGSTESSDHLRVASGPMPVHTTSKRPRVDPVLADRSAAEMSGRGSVLASLSPLRKASLSSSSSLGPKERQTGAAADMPQPAVRHQGREPLLVVKPTHSSPEGGCREVPQAASKTHGLLQAARPQAQDKRPAVTSQPCPPAATHSLGLGSNLSFGPGAKRPAQAPIQACLNFPKKPRLGPFQIPESAIQGGELGAPENLQPPPAATELGPSTSPQMGRRTPAQVPSVDRQPPHSTPCLPTAQACTMSHHSAASHDGAQPLRVLFRRLENGRWSSSLLAAPSFHSPEKPGTFLAQSPHVSEKSEAPCVRVPPSVLYEDLQVSSSSEDSDSDLE</sequence>
<organism>
    <name type="scientific">Homo sapiens</name>
    <name type="common">Human</name>
    <dbReference type="NCBI Taxonomy" id="9606"/>
    <lineage>
        <taxon>Eukaryota</taxon>
        <taxon>Metazoa</taxon>
        <taxon>Chordata</taxon>
        <taxon>Craniata</taxon>
        <taxon>Vertebrata</taxon>
        <taxon>Euteleostomi</taxon>
        <taxon>Mammalia</taxon>
        <taxon>Eutheria</taxon>
        <taxon>Euarchontoglires</taxon>
        <taxon>Primates</taxon>
        <taxon>Haplorrhini</taxon>
        <taxon>Catarrhini</taxon>
        <taxon>Hominidae</taxon>
        <taxon>Homo</taxon>
    </lineage>
</organism>
<feature type="chain" id="PRO_0000299599" description="Protein FAM90A9">
    <location>
        <begin position="1"/>
        <end position="464"/>
    </location>
</feature>
<feature type="region of interest" description="Disordered" evidence="1">
    <location>
        <begin position="1"/>
        <end position="42"/>
    </location>
</feature>
<feature type="region of interest" description="Disordered" evidence="1">
    <location>
        <begin position="70"/>
        <end position="389"/>
    </location>
</feature>
<feature type="region of interest" description="Disordered" evidence="1">
    <location>
        <begin position="411"/>
        <end position="437"/>
    </location>
</feature>
<feature type="compositionally biased region" description="Basic and acidic residues" evidence="1">
    <location>
        <begin position="74"/>
        <end position="89"/>
    </location>
</feature>
<feature type="compositionally biased region" description="Basic and acidic residues" evidence="1">
    <location>
        <begin position="97"/>
        <end position="114"/>
    </location>
</feature>
<feature type="compositionally biased region" description="Low complexity" evidence="1">
    <location>
        <begin position="180"/>
        <end position="197"/>
    </location>
</feature>
<gene>
    <name type="primary">FAM90A9</name>
    <name type="synonym">FAM90A9P</name>
</gene>
<name>F90A9_HUMAN</name>
<comment type="similarity">
    <text evidence="2">Belongs to the FAM90 family.</text>
</comment>
<accession>A6NNJ1</accession>
<dbReference type="EMBL" id="AC084121">
    <property type="status" value="NOT_ANNOTATED_CDS"/>
    <property type="molecule type" value="Genomic_DNA"/>
</dbReference>
<dbReference type="RefSeq" id="NP_001157920.1">
    <property type="nucleotide sequence ID" value="NM_001164448.1"/>
</dbReference>
<dbReference type="iPTMnet" id="A6NNJ1"/>
<dbReference type="PhosphoSitePlus" id="A6NNJ1"/>
<dbReference type="BioMuta" id="HGNC:32257"/>
<dbReference type="MassIVE" id="A6NNJ1"/>
<dbReference type="Antibodypedia" id="82515">
    <property type="antibodies" value="1 antibodies from 1 providers"/>
</dbReference>
<dbReference type="Ensembl" id="ENST00000648344.1">
    <property type="protein sequence ID" value="ENSP00000497259.1"/>
    <property type="gene ID" value="ENSG00000285607.1"/>
</dbReference>
<dbReference type="GeneID" id="441327"/>
<dbReference type="MANE-Select" id="ENST00000648344.1">
    <property type="protein sequence ID" value="ENSP00000497259.1"/>
    <property type="RefSeq nucleotide sequence ID" value="NM_001164448.1"/>
    <property type="RefSeq protein sequence ID" value="NP_001157920.1"/>
</dbReference>
<dbReference type="AGR" id="HGNC:32257"/>
<dbReference type="GeneCards" id="FAM90A9"/>
<dbReference type="HGNC" id="HGNC:32257">
    <property type="gene designation" value="FAM90A9"/>
</dbReference>
<dbReference type="HPA" id="ENSG00000285607">
    <property type="expression patterns" value="Not detected"/>
</dbReference>
<dbReference type="MIM" id="613046">
    <property type="type" value="gene"/>
</dbReference>
<dbReference type="neXtProt" id="NX_A6NNJ1"/>
<dbReference type="VEuPathDB" id="HostDB:ENSG00000285607"/>
<dbReference type="GeneTree" id="ENSGT00910000144208"/>
<dbReference type="InParanoid" id="A6NNJ1"/>
<dbReference type="PAN-GO" id="A6NNJ1">
    <property type="GO annotations" value="0 GO annotations based on evolutionary models"/>
</dbReference>
<dbReference type="PhylomeDB" id="A6NNJ1"/>
<dbReference type="Pharos" id="A6NNJ1">
    <property type="development level" value="Tdark"/>
</dbReference>
<dbReference type="Proteomes" id="UP000005640">
    <property type="component" value="Chromosome 8"/>
</dbReference>
<dbReference type="RNAct" id="A6NNJ1">
    <property type="molecule type" value="protein"/>
</dbReference>
<dbReference type="Bgee" id="ENSG00000285607">
    <property type="expression patterns" value="Expressed in ventricular zone and 13 other cell types or tissues"/>
</dbReference>
<dbReference type="InterPro" id="IPR039213">
    <property type="entry name" value="FAM90"/>
</dbReference>
<dbReference type="InterPro" id="IPR041670">
    <property type="entry name" value="Znf-CCHC_6"/>
</dbReference>
<dbReference type="PANTHER" id="PTHR16035:SF14">
    <property type="entry name" value="FAMILY WITH SEQUENCE SIMILARITY 90 MEMBER A11, PSEUDOGENE-RELATED"/>
    <property type="match status" value="1"/>
</dbReference>
<dbReference type="PANTHER" id="PTHR16035">
    <property type="entry name" value="PROTEIN FAM90A1"/>
    <property type="match status" value="1"/>
</dbReference>
<dbReference type="Pfam" id="PF15288">
    <property type="entry name" value="zf-CCHC_6"/>
    <property type="match status" value="1"/>
</dbReference>
<keyword id="KW-1185">Reference proteome</keyword>
<evidence type="ECO:0000256" key="1">
    <source>
        <dbReference type="SAM" id="MobiDB-lite"/>
    </source>
</evidence>
<evidence type="ECO:0000305" key="2"/>
<proteinExistence type="inferred from homology"/>
<protein>
    <recommendedName>
        <fullName>Protein FAM90A9</fullName>
    </recommendedName>
</protein>